<dbReference type="EC" id="2.1.2.9" evidence="1"/>
<dbReference type="EMBL" id="CT978603">
    <property type="protein sequence ID" value="CAK28376.1"/>
    <property type="molecule type" value="Genomic_DNA"/>
</dbReference>
<dbReference type="SMR" id="A5GU17"/>
<dbReference type="STRING" id="316278.SynRCC307_1473"/>
<dbReference type="KEGG" id="syr:SynRCC307_1473"/>
<dbReference type="eggNOG" id="COG0223">
    <property type="taxonomic scope" value="Bacteria"/>
</dbReference>
<dbReference type="HOGENOM" id="CLU_033347_1_1_3"/>
<dbReference type="OrthoDB" id="9802815at2"/>
<dbReference type="Proteomes" id="UP000001115">
    <property type="component" value="Chromosome"/>
</dbReference>
<dbReference type="GO" id="GO:0005829">
    <property type="term" value="C:cytosol"/>
    <property type="evidence" value="ECO:0007669"/>
    <property type="project" value="TreeGrafter"/>
</dbReference>
<dbReference type="GO" id="GO:0004479">
    <property type="term" value="F:methionyl-tRNA formyltransferase activity"/>
    <property type="evidence" value="ECO:0007669"/>
    <property type="project" value="UniProtKB-UniRule"/>
</dbReference>
<dbReference type="CDD" id="cd08646">
    <property type="entry name" value="FMT_core_Met-tRNA-FMT_N"/>
    <property type="match status" value="1"/>
</dbReference>
<dbReference type="CDD" id="cd08704">
    <property type="entry name" value="Met_tRNA_FMT_C"/>
    <property type="match status" value="1"/>
</dbReference>
<dbReference type="Gene3D" id="3.40.50.12230">
    <property type="match status" value="1"/>
</dbReference>
<dbReference type="HAMAP" id="MF_00182">
    <property type="entry name" value="Formyl_trans"/>
    <property type="match status" value="1"/>
</dbReference>
<dbReference type="InterPro" id="IPR005794">
    <property type="entry name" value="Fmt"/>
</dbReference>
<dbReference type="InterPro" id="IPR005793">
    <property type="entry name" value="Formyl_trans_C"/>
</dbReference>
<dbReference type="InterPro" id="IPR002376">
    <property type="entry name" value="Formyl_transf_N"/>
</dbReference>
<dbReference type="InterPro" id="IPR036477">
    <property type="entry name" value="Formyl_transf_N_sf"/>
</dbReference>
<dbReference type="InterPro" id="IPR011034">
    <property type="entry name" value="Formyl_transferase-like_C_sf"/>
</dbReference>
<dbReference type="InterPro" id="IPR044135">
    <property type="entry name" value="Met-tRNA-FMT_C"/>
</dbReference>
<dbReference type="InterPro" id="IPR041711">
    <property type="entry name" value="Met-tRNA-FMT_N"/>
</dbReference>
<dbReference type="NCBIfam" id="TIGR00460">
    <property type="entry name" value="fmt"/>
    <property type="match status" value="1"/>
</dbReference>
<dbReference type="PANTHER" id="PTHR11138">
    <property type="entry name" value="METHIONYL-TRNA FORMYLTRANSFERASE"/>
    <property type="match status" value="1"/>
</dbReference>
<dbReference type="PANTHER" id="PTHR11138:SF5">
    <property type="entry name" value="METHIONYL-TRNA FORMYLTRANSFERASE, MITOCHONDRIAL"/>
    <property type="match status" value="1"/>
</dbReference>
<dbReference type="Pfam" id="PF02911">
    <property type="entry name" value="Formyl_trans_C"/>
    <property type="match status" value="1"/>
</dbReference>
<dbReference type="Pfam" id="PF00551">
    <property type="entry name" value="Formyl_trans_N"/>
    <property type="match status" value="1"/>
</dbReference>
<dbReference type="SUPFAM" id="SSF50486">
    <property type="entry name" value="FMT C-terminal domain-like"/>
    <property type="match status" value="1"/>
</dbReference>
<dbReference type="SUPFAM" id="SSF53328">
    <property type="entry name" value="Formyltransferase"/>
    <property type="match status" value="1"/>
</dbReference>
<feature type="chain" id="PRO_1000020191" description="Methionyl-tRNA formyltransferase">
    <location>
        <begin position="1"/>
        <end position="330"/>
    </location>
</feature>
<feature type="binding site" evidence="1">
    <location>
        <begin position="112"/>
        <end position="115"/>
    </location>
    <ligand>
        <name>(6S)-5,6,7,8-tetrahydrofolate</name>
        <dbReference type="ChEBI" id="CHEBI:57453"/>
    </ligand>
</feature>
<proteinExistence type="inferred from homology"/>
<name>FMT_SYNR3</name>
<keyword id="KW-0648">Protein biosynthesis</keyword>
<keyword id="KW-1185">Reference proteome</keyword>
<keyword id="KW-0808">Transferase</keyword>
<protein>
    <recommendedName>
        <fullName evidence="1">Methionyl-tRNA formyltransferase</fullName>
        <ecNumber evidence="1">2.1.2.9</ecNumber>
    </recommendedName>
</protein>
<evidence type="ECO:0000255" key="1">
    <source>
        <dbReference type="HAMAP-Rule" id="MF_00182"/>
    </source>
</evidence>
<sequence length="330" mass="35405">MRVLFWGTPAYAVPTLEALHGAGHQIVGVVTQPDRRRGRGSSLMPSPVKARALDLLGDVPVLTPQRIRREPETQEQLAALQADLSVVVAFGQLLPPEVLQQPPLGCWNGHGSLLPRWRGAGPIQWCLMEGDAQTGVGIMAMEPGLDTGPVLLERALDVQLLENAAGLAERLSHLTAELFVEALPRIEAAGPGPEAERLSRLAVTPQSDEGVSLARLLSKDDYRIDWSERALAIHRKVMGLFPGAHCSWRGKRLKLLATEPLVARLADQLSPQAAALSQRQWPSAEPGSILEAVRGVGLVLATSGCPILLRQAQLEGKAASSGDSLIQQLS</sequence>
<accession>A5GU17</accession>
<reference key="1">
    <citation type="submission" date="2006-05" db="EMBL/GenBank/DDBJ databases">
        <authorList>
            <consortium name="Genoscope"/>
        </authorList>
    </citation>
    <scope>NUCLEOTIDE SEQUENCE [LARGE SCALE GENOMIC DNA]</scope>
    <source>
        <strain>RCC307</strain>
    </source>
</reference>
<gene>
    <name evidence="1" type="primary">fmt</name>
    <name type="ordered locus">SynRCC307_1473</name>
</gene>
<comment type="function">
    <text evidence="1">Attaches a formyl group to the free amino group of methionyl-tRNA(fMet). The formyl group appears to play a dual role in the initiator identity of N-formylmethionyl-tRNA by promoting its recognition by IF2 and preventing the misappropriation of this tRNA by the elongation apparatus.</text>
</comment>
<comment type="catalytic activity">
    <reaction evidence="1">
        <text>L-methionyl-tRNA(fMet) + (6R)-10-formyltetrahydrofolate = N-formyl-L-methionyl-tRNA(fMet) + (6S)-5,6,7,8-tetrahydrofolate + H(+)</text>
        <dbReference type="Rhea" id="RHEA:24380"/>
        <dbReference type="Rhea" id="RHEA-COMP:9952"/>
        <dbReference type="Rhea" id="RHEA-COMP:9953"/>
        <dbReference type="ChEBI" id="CHEBI:15378"/>
        <dbReference type="ChEBI" id="CHEBI:57453"/>
        <dbReference type="ChEBI" id="CHEBI:78530"/>
        <dbReference type="ChEBI" id="CHEBI:78844"/>
        <dbReference type="ChEBI" id="CHEBI:195366"/>
        <dbReference type="EC" id="2.1.2.9"/>
    </reaction>
</comment>
<comment type="similarity">
    <text evidence="1">Belongs to the Fmt family.</text>
</comment>
<organism>
    <name type="scientific">Synechococcus sp. (strain RCC307)</name>
    <dbReference type="NCBI Taxonomy" id="316278"/>
    <lineage>
        <taxon>Bacteria</taxon>
        <taxon>Bacillati</taxon>
        <taxon>Cyanobacteriota</taxon>
        <taxon>Cyanophyceae</taxon>
        <taxon>Synechococcales</taxon>
        <taxon>Synechococcaceae</taxon>
        <taxon>Synechococcus</taxon>
    </lineage>
</organism>